<gene>
    <name evidence="24" type="primary">tal1</name>
    <name evidence="16 17" type="synonym">scl</name>
    <name evidence="20" type="synonym">tal-1</name>
    <name type="ORF">si:ch211-135j1.3</name>
</gene>
<reference evidence="18 19" key="1">
    <citation type="journal article" date="1998" name="EMBO J.">
        <title>The SCL gene specifies haemangioblast development from early mesoderm.</title>
        <authorList>
            <person name="Gering M."/>
            <person name="Rodaway A.R.F."/>
            <person name="Goettgens B."/>
            <person name="Patient R.K."/>
            <person name="Green A.R."/>
        </authorList>
    </citation>
    <scope>NUCLEOTIDE SEQUENCE [MRNA] (ISOFORM ALPHA)</scope>
    <scope>FUNCTION</scope>
    <scope>TISSUE SPECIFICITY</scope>
    <source>
        <tissue evidence="15">Embryo</tissue>
    </source>
</reference>
<reference evidence="18 20" key="2">
    <citation type="journal article" date="1998" name="Genes Dev.">
        <title>SCL/Tal-1 transcription factor acts downstream of cloche to specify hematopoietic and vascular progenitors in zebrafish.</title>
        <authorList>
            <person name="Liao E.C."/>
            <person name="Paw B.H."/>
            <person name="Oates A.C."/>
            <person name="Pratt S.J."/>
            <person name="Postlethwait J.H."/>
            <person name="Zon L.I."/>
        </authorList>
    </citation>
    <scope>NUCLEOTIDE SEQUENCE [MRNA] (ISOFORM ALPHA)</scope>
    <scope>FUNCTION</scope>
    <scope>TISSUE SPECIFICITY</scope>
    <source>
        <tissue evidence="14">Angioblast</tissue>
    </source>
</reference>
<reference evidence="18 22" key="3">
    <citation type="journal article" date="2007" name="PLoS Biol.">
        <title>Distinct functions for different scl isoforms in zebrafish primitive and definitive hematopoiesis.</title>
        <authorList>
            <person name="Qian F."/>
            <person name="Zhen F."/>
            <person name="Xu J."/>
            <person name="Huang M."/>
            <person name="Li W."/>
            <person name="Wen Z."/>
        </authorList>
    </citation>
    <scope>NUCLEOTIDE SEQUENCE [MRNA] (ISOFORMS ALPHA AND BETA)</scope>
    <scope>FUNCTION</scope>
    <scope>TISSUE SPECIFICITY</scope>
    <scope>DEVELOPMENTAL STAGE</scope>
</reference>
<reference key="4">
    <citation type="journal article" date="2013" name="Nature">
        <title>The zebrafish reference genome sequence and its relationship to the human genome.</title>
        <authorList>
            <person name="Howe K."/>
            <person name="Clark M.D."/>
            <person name="Torroja C.F."/>
            <person name="Torrance J."/>
            <person name="Berthelot C."/>
            <person name="Muffato M."/>
            <person name="Collins J.E."/>
            <person name="Humphray S."/>
            <person name="McLaren K."/>
            <person name="Matthews L."/>
            <person name="McLaren S."/>
            <person name="Sealy I."/>
            <person name="Caccamo M."/>
            <person name="Churcher C."/>
            <person name="Scott C."/>
            <person name="Barrett J.C."/>
            <person name="Koch R."/>
            <person name="Rauch G.J."/>
            <person name="White S."/>
            <person name="Chow W."/>
            <person name="Kilian B."/>
            <person name="Quintais L.T."/>
            <person name="Guerra-Assuncao J.A."/>
            <person name="Zhou Y."/>
            <person name="Gu Y."/>
            <person name="Yen J."/>
            <person name="Vogel J.H."/>
            <person name="Eyre T."/>
            <person name="Redmond S."/>
            <person name="Banerjee R."/>
            <person name="Chi J."/>
            <person name="Fu B."/>
            <person name="Langley E."/>
            <person name="Maguire S.F."/>
            <person name="Laird G.K."/>
            <person name="Lloyd D."/>
            <person name="Kenyon E."/>
            <person name="Donaldson S."/>
            <person name="Sehra H."/>
            <person name="Almeida-King J."/>
            <person name="Loveland J."/>
            <person name="Trevanion S."/>
            <person name="Jones M."/>
            <person name="Quail M."/>
            <person name="Willey D."/>
            <person name="Hunt A."/>
            <person name="Burton J."/>
            <person name="Sims S."/>
            <person name="McLay K."/>
            <person name="Plumb B."/>
            <person name="Davis J."/>
            <person name="Clee C."/>
            <person name="Oliver K."/>
            <person name="Clark R."/>
            <person name="Riddle C."/>
            <person name="Elliot D."/>
            <person name="Threadgold G."/>
            <person name="Harden G."/>
            <person name="Ware D."/>
            <person name="Begum S."/>
            <person name="Mortimore B."/>
            <person name="Kerry G."/>
            <person name="Heath P."/>
            <person name="Phillimore B."/>
            <person name="Tracey A."/>
            <person name="Corby N."/>
            <person name="Dunn M."/>
            <person name="Johnson C."/>
            <person name="Wood J."/>
            <person name="Clark S."/>
            <person name="Pelan S."/>
            <person name="Griffiths G."/>
            <person name="Smith M."/>
            <person name="Glithero R."/>
            <person name="Howden P."/>
            <person name="Barker N."/>
            <person name="Lloyd C."/>
            <person name="Stevens C."/>
            <person name="Harley J."/>
            <person name="Holt K."/>
            <person name="Panagiotidis G."/>
            <person name="Lovell J."/>
            <person name="Beasley H."/>
            <person name="Henderson C."/>
            <person name="Gordon D."/>
            <person name="Auger K."/>
            <person name="Wright D."/>
            <person name="Collins J."/>
            <person name="Raisen C."/>
            <person name="Dyer L."/>
            <person name="Leung K."/>
            <person name="Robertson L."/>
            <person name="Ambridge K."/>
            <person name="Leongamornlert D."/>
            <person name="McGuire S."/>
            <person name="Gilderthorp R."/>
            <person name="Griffiths C."/>
            <person name="Manthravadi D."/>
            <person name="Nichol S."/>
            <person name="Barker G."/>
            <person name="Whitehead S."/>
            <person name="Kay M."/>
            <person name="Brown J."/>
            <person name="Murnane C."/>
            <person name="Gray E."/>
            <person name="Humphries M."/>
            <person name="Sycamore N."/>
            <person name="Barker D."/>
            <person name="Saunders D."/>
            <person name="Wallis J."/>
            <person name="Babbage A."/>
            <person name="Hammond S."/>
            <person name="Mashreghi-Mohammadi M."/>
            <person name="Barr L."/>
            <person name="Martin S."/>
            <person name="Wray P."/>
            <person name="Ellington A."/>
            <person name="Matthews N."/>
            <person name="Ellwood M."/>
            <person name="Woodmansey R."/>
            <person name="Clark G."/>
            <person name="Cooper J."/>
            <person name="Tromans A."/>
            <person name="Grafham D."/>
            <person name="Skuce C."/>
            <person name="Pandian R."/>
            <person name="Andrews R."/>
            <person name="Harrison E."/>
            <person name="Kimberley A."/>
            <person name="Garnett J."/>
            <person name="Fosker N."/>
            <person name="Hall R."/>
            <person name="Garner P."/>
            <person name="Kelly D."/>
            <person name="Bird C."/>
            <person name="Palmer S."/>
            <person name="Gehring I."/>
            <person name="Berger A."/>
            <person name="Dooley C.M."/>
            <person name="Ersan-Urun Z."/>
            <person name="Eser C."/>
            <person name="Geiger H."/>
            <person name="Geisler M."/>
            <person name="Karotki L."/>
            <person name="Kirn A."/>
            <person name="Konantz J."/>
            <person name="Konantz M."/>
            <person name="Oberlander M."/>
            <person name="Rudolph-Geiger S."/>
            <person name="Teucke M."/>
            <person name="Lanz C."/>
            <person name="Raddatz G."/>
            <person name="Osoegawa K."/>
            <person name="Zhu B."/>
            <person name="Rapp A."/>
            <person name="Widaa S."/>
            <person name="Langford C."/>
            <person name="Yang F."/>
            <person name="Schuster S.C."/>
            <person name="Carter N.P."/>
            <person name="Harrow J."/>
            <person name="Ning Z."/>
            <person name="Herrero J."/>
            <person name="Searle S.M."/>
            <person name="Enright A."/>
            <person name="Geisler R."/>
            <person name="Plasterk R.H."/>
            <person name="Lee C."/>
            <person name="Westerfield M."/>
            <person name="de Jong P.J."/>
            <person name="Zon L.I."/>
            <person name="Postlethwait J.H."/>
            <person name="Nusslein-Volhard C."/>
            <person name="Hubbard T.J."/>
            <person name="Roest Crollius H."/>
            <person name="Rogers J."/>
            <person name="Stemple D.L."/>
        </authorList>
    </citation>
    <scope>NUCLEOTIDE SEQUENCE [LARGE SCALE GENOMIC DNA]</scope>
    <source>
        <strain>Tuebingen</strain>
    </source>
</reference>
<reference evidence="18 23" key="5">
    <citation type="submission" date="2004-04" db="EMBL/GenBank/DDBJ databases">
        <authorList>
            <consortium name="NIH - Zebrafish Gene Collection (ZGC) project"/>
        </authorList>
    </citation>
    <scope>NUCLEOTIDE SEQUENCE [LARGE SCALE MRNA] (ISOFORM ALPHA)</scope>
    <source>
        <tissue evidence="21">Embryo</tissue>
    </source>
</reference>
<reference evidence="18" key="6">
    <citation type="journal article" date="1999" name="Dev. Biol.">
        <title>Distinct 5' SCL enhancers direct transcription to developing brain, spinal cord, and endothelium: neural expression is mediated by GATA factor binding sites.</title>
        <authorList>
            <person name="Sinclair A.M."/>
            <person name="Goettgens B."/>
            <person name="Barton L.M."/>
            <person name="Stanley M.L."/>
            <person name="Pardanaud L."/>
            <person name="Klaine M."/>
            <person name="Gering M."/>
            <person name="Bahn S."/>
            <person name="Sanchez M.-J."/>
            <person name="Bench A.J."/>
            <person name="Fordham J.L."/>
            <person name="Bockamp E.-O."/>
            <person name="Green A.R."/>
        </authorList>
    </citation>
    <scope>TISSUE SPECIFICITY</scope>
</reference>
<reference evidence="18" key="7">
    <citation type="journal article" date="2000" name="Development">
        <title>Hhex and scl function in parallel to regulate early endothelial and blood differentiation in zebrafish.</title>
        <authorList>
            <person name="Liao W."/>
            <person name="Ho C.-Y."/>
            <person name="Yan Y.L."/>
            <person name="Postlethwait J.H."/>
            <person name="Stainier D.Y.R."/>
        </authorList>
    </citation>
    <scope>FUNCTION</scope>
</reference>
<reference evidence="18" key="8">
    <citation type="journal article" date="2001" name="Proc. Natl. Acad. Sci. U.S.A.">
        <title>Regulation of the stem cell leukemia (SCL) gene: a tale of two fishes.</title>
        <authorList>
            <person name="Barton L.M."/>
            <person name="Goettgens B."/>
            <person name="Gering M."/>
            <person name="Gilbert J.G.R."/>
            <person name="Grafham D."/>
            <person name="Rogers J."/>
            <person name="Bentley D."/>
            <person name="Patient R.K."/>
            <person name="Green A.R."/>
        </authorList>
    </citation>
    <scope>TISSUE SPECIFICITY</scope>
</reference>
<reference evidence="18" key="9">
    <citation type="journal article" date="2003" name="Development">
        <title>Lmo2 and Scl/Tal1 convert non-axial mesoderm into haemangioblasts which differentiate into endothelial cells in the absence of Gata1.</title>
        <authorList>
            <person name="Gering M."/>
            <person name="Yamada Y."/>
            <person name="Rabbitts T.H."/>
            <person name="Patient R.K."/>
        </authorList>
    </citation>
    <scope>FUNCTION</scope>
</reference>
<reference evidence="18" key="10">
    <citation type="journal article" date="2005" name="Blood">
        <title>Scl is required for dorsal aorta as well as blood formation in zebrafish embryos.</title>
        <authorList>
            <person name="Patterson L.J."/>
            <person name="Gering M."/>
            <person name="Patient R.K."/>
        </authorList>
    </citation>
    <scope>FUNCTION</scope>
</reference>
<reference evidence="18" key="11">
    <citation type="journal article" date="2005" name="Dev. Biol.">
        <title>Zebrafish scl functions independently in hematopoietic and endothelial development.</title>
        <authorList>
            <person name="Dooley K.A."/>
            <person name="Davidson A.J."/>
            <person name="Zon L.I."/>
        </authorList>
    </citation>
    <scope>FUNCTION</scope>
</reference>
<reference evidence="18" key="12">
    <citation type="journal article" date="2005" name="J. Biol. Chem.">
        <title>Distinct roles for SCL in erythroid specification and maturation in zebrafish.</title>
        <authorList>
            <person name="Juarez M.A."/>
            <person name="Su F."/>
            <person name="Chun S."/>
            <person name="Kiel M.J."/>
            <person name="Lyons S.E."/>
        </authorList>
    </citation>
    <scope>FUNCTION</scope>
    <scope>MUTAGENESIS OF 193-ARG--ARG-195</scope>
</reference>
<reference evidence="18" key="13">
    <citation type="journal article" date="2007" name="Blood">
        <title>The transcription factors Scl and Lmo2 act together during development of the hemangioblast in zebrafish.</title>
        <authorList>
            <person name="Patterson L.J."/>
            <person name="Gering M."/>
            <person name="Eckfeldt C.E."/>
            <person name="Green A.R."/>
            <person name="Verfaillie C.M."/>
            <person name="Ekker S.C."/>
            <person name="Patient R.K."/>
        </authorList>
    </citation>
    <scope>FUNCTION</scope>
</reference>
<reference evidence="18" key="14">
    <citation type="journal article" date="2007" name="PLoS Genet.">
        <title>Early endocardial morphogenesis requires Scl/Tal1.</title>
        <authorList>
            <person name="Bussmann J."/>
            <person name="Bakkers J."/>
            <person name="Schulte-Merker S."/>
        </authorList>
    </citation>
    <scope>FUNCTION</scope>
    <scope>TISSUE SPECIFICITY</scope>
</reference>
<feature type="chain" id="PRO_0000320003" description="T-cell acute lymphocytic leukemia protein 1 homolog">
    <location>
        <begin position="1"/>
        <end position="324"/>
    </location>
</feature>
<feature type="domain" description="bHLH" evidence="2">
    <location>
        <begin position="185"/>
        <end position="237"/>
    </location>
</feature>
<feature type="region of interest" description="Disordered" evidence="3">
    <location>
        <begin position="1"/>
        <end position="49"/>
    </location>
</feature>
<feature type="region of interest" description="Disordered" evidence="3">
    <location>
        <begin position="276"/>
        <end position="324"/>
    </location>
</feature>
<feature type="splice variant" id="VSP_052683" description="In isoform beta." evidence="16">
    <location>
        <begin position="1"/>
        <end position="118"/>
    </location>
</feature>
<feature type="mutagenesis site" description="Abolishes DNA binding." evidence="10">
    <original>RER</original>
    <variation>AAA</variation>
    <location>
        <begin position="193"/>
        <end position="195"/>
    </location>
</feature>
<feature type="sequence conflict" description="In Ref. 4; CAC95157." evidence="18" ref="4">
    <original>A</original>
    <variation>T</variation>
    <location>
        <position position="16"/>
    </location>
</feature>
<feature type="sequence conflict" description="In Ref. 4; CAC95157." evidence="18" ref="4">
    <original>A</original>
    <variation>T</variation>
    <location>
        <position position="20"/>
    </location>
</feature>
<feature type="sequence conflict" description="In Ref. 2; AAC41264." evidence="18" ref="2">
    <original>A</original>
    <variation>V</variation>
    <location>
        <position position="79"/>
    </location>
</feature>
<feature type="sequence conflict" description="In Ref. 2; AAC41264." evidence="18" ref="2">
    <original>DT</original>
    <variation>EI</variation>
    <location>
        <begin position="116"/>
        <end position="117"/>
    </location>
</feature>
<feature type="sequence conflict" description="In Ref. 2; AAC41264." evidence="18" ref="2">
    <original>S</original>
    <variation>I</variation>
    <location>
        <position position="123"/>
    </location>
</feature>
<feature type="sequence conflict" description="In Ref. 2; AAC41264." evidence="18" ref="2">
    <original>F</original>
    <variation>Y</variation>
    <location>
        <position position="127"/>
    </location>
</feature>
<feature type="sequence conflict" description="In Ref. 2; AAC41264." evidence="18" ref="2">
    <original>L</original>
    <variation>F</variation>
    <location>
        <position position="135"/>
    </location>
</feature>
<feature type="sequence conflict" description="In Ref. 2; AAC41264." evidence="18" ref="2">
    <original>L</original>
    <variation>F</variation>
    <location>
        <position position="143"/>
    </location>
</feature>
<feature type="sequence conflict" description="In Ref. 2; AAC41264." evidence="18" ref="2">
    <original>S</original>
    <variation>T</variation>
    <location>
        <position position="283"/>
    </location>
</feature>
<proteinExistence type="evidence at protein level"/>
<name>TAL1_DANRE</name>
<accession>O93507</accession>
<accession>A4UTQ6</accession>
<accession>O57562</accession>
<accession>Q90W24</accession>
<organism>
    <name type="scientific">Danio rerio</name>
    <name type="common">Zebrafish</name>
    <name type="synonym">Brachydanio rerio</name>
    <dbReference type="NCBI Taxonomy" id="7955"/>
    <lineage>
        <taxon>Eukaryota</taxon>
        <taxon>Metazoa</taxon>
        <taxon>Chordata</taxon>
        <taxon>Craniata</taxon>
        <taxon>Vertebrata</taxon>
        <taxon>Euteleostomi</taxon>
        <taxon>Actinopterygii</taxon>
        <taxon>Neopterygii</taxon>
        <taxon>Teleostei</taxon>
        <taxon>Ostariophysi</taxon>
        <taxon>Cypriniformes</taxon>
        <taxon>Danionidae</taxon>
        <taxon>Danioninae</taxon>
        <taxon>Danio</taxon>
    </lineage>
</organism>
<evidence type="ECO:0000250" key="1">
    <source>
        <dbReference type="UniProtKB" id="P22091"/>
    </source>
</evidence>
<evidence type="ECO:0000255" key="2">
    <source>
        <dbReference type="PROSITE-ProRule" id="PRU00981"/>
    </source>
</evidence>
<evidence type="ECO:0000256" key="3">
    <source>
        <dbReference type="SAM" id="MobiDB-lite"/>
    </source>
</evidence>
<evidence type="ECO:0000269" key="4">
    <source>
    </source>
</evidence>
<evidence type="ECO:0000269" key="5">
    <source>
    </source>
</evidence>
<evidence type="ECO:0000269" key="6">
    <source>
    </source>
</evidence>
<evidence type="ECO:0000269" key="7">
    <source>
    </source>
</evidence>
<evidence type="ECO:0000269" key="8">
    <source>
    </source>
</evidence>
<evidence type="ECO:0000269" key="9">
    <source>
    </source>
</evidence>
<evidence type="ECO:0000269" key="10">
    <source>
    </source>
</evidence>
<evidence type="ECO:0000269" key="11">
    <source>
    </source>
</evidence>
<evidence type="ECO:0000269" key="12">
    <source>
    </source>
</evidence>
<evidence type="ECO:0000269" key="13">
    <source>
    </source>
</evidence>
<evidence type="ECO:0000269" key="14">
    <source>
    </source>
</evidence>
<evidence type="ECO:0000269" key="15">
    <source>
    </source>
</evidence>
<evidence type="ECO:0000303" key="16">
    <source>
    </source>
</evidence>
<evidence type="ECO:0000303" key="17">
    <source>
    </source>
</evidence>
<evidence type="ECO:0000305" key="18"/>
<evidence type="ECO:0000312" key="19">
    <source>
        <dbReference type="EMBL" id="AAC36057.1"/>
    </source>
</evidence>
<evidence type="ECO:0000312" key="20">
    <source>
        <dbReference type="EMBL" id="AAC41264.1"/>
    </source>
</evidence>
<evidence type="ECO:0000312" key="21">
    <source>
        <dbReference type="EMBL" id="AAH68324.1"/>
    </source>
</evidence>
<evidence type="ECO:0000312" key="22">
    <source>
        <dbReference type="EMBL" id="ABO77946.1"/>
    </source>
</evidence>
<evidence type="ECO:0000312" key="23">
    <source>
        <dbReference type="EMBL" id="CAK04103.1"/>
    </source>
</evidence>
<evidence type="ECO:0000312" key="24">
    <source>
        <dbReference type="ZFIN" id="ZDB-GENE-980526-501"/>
    </source>
</evidence>
<protein>
    <recommendedName>
        <fullName>T-cell acute lymphocytic leukemia protein 1 homolog</fullName>
        <shortName>TAL-1</shortName>
    </recommendedName>
    <alternativeName>
        <fullName>Stem cell protein</fullName>
        <shortName>zSCL</shortName>
    </alternativeName>
</protein>
<comment type="function">
    <text evidence="5 7 8 9 10 11 12 13 14 15">Transcription factor that plays a pivotal role in hemopoietic and endothelial development, acting synergistically with lmo2 and downstream of clo. Specifies mesodermal precursors to a hemangioblast cell fate. Hemangioblasts are bipotential precursors of blood and endothelium, and in the absence of hemopoietic induction cues such as gata1, tal1/scl-lmo2-induced hemangioblasts differentiate into endothelial cells. Isoform alpha and isoform beta are redundant for the initiation of primitive hemopoiesis but have distinct roles in the regulation of primitive erythroid differentiation and definitive hemopoietic stem cell specification, most likely due to differences in expression levels. Specification of definitive hemopoietic stem cells requires isoform beta. DNA binding is required for erythroid maturation, but not for its other hemopoietic functions. Endothelial roles include development of the dorsal aorta, the site of definitive hemopoiesis in the embryo. Required for angiogenesis but not angioblast specification. Has an additional role in endocardium formation during heart development. May play a role in central nervous system development.</text>
</comment>
<comment type="subcellular location">
    <subcellularLocation>
        <location evidence="1 2">Nucleus</location>
    </subcellularLocation>
</comment>
<comment type="alternative products">
    <event type="alternative splicing"/>
    <isoform>
        <id>O93507-1</id>
        <name evidence="12 14 15">alpha</name>
        <sequence type="displayed"/>
    </isoform>
    <isoform>
        <id>O93507-2</id>
        <name evidence="12">beta</name>
        <sequence type="described" ref="VSP_052683"/>
    </isoform>
</comment>
<comment type="tissue specificity">
    <text evidence="4 6 12 13 14 15">Expressed in hemopoietic and endothelial lineages. Isoform beta emerges first, expressing in the entire anterior and posterior lateral mesoderm (ALM and PLM respectively), and in the ventral wall of the dorsal aorta, where definitive hemopoiesis begins. Isoform alpha expresses later as two pairs of stripes in the PLM and ALM, and becomes restricted to the intermediate cell mass (ICM) by the 18-somite stage. The ICM is the key site of primitive hemopoiesis, giving rise to the erythroid lineage. Also expressed in all stages of endocardial cell migration and in the developing midbrain, hindbrain and spinal cord. In adults, expressed in the main hemopoietic organs, namely the kidney (where isoform alpha is the predominant isoform) and the spleen. Also expressed in the liver, gill and gonads.</text>
</comment>
<comment type="developmental stage">
    <text evidence="12">Expression of isoform beta begins at the 1-2 somite stage, peaks at the 11-18 somite stage, and is maintained at a lower level in the adult kidney. Isoform alpha isn't expressed until the 4-somite stage, after which expression levels rapidly increase.</text>
</comment>
<comment type="sequence caution" evidence="18">
    <conflict type="erroneous initiation">
        <sequence resource="EMBL-CDS" id="AAC41264"/>
    </conflict>
    <text>Truncated N-terminus.</text>
</comment>
<comment type="sequence caution" evidence="18">
    <conflict type="frameshift">
        <sequence resource="EMBL-CDS" id="AAC41264"/>
    </conflict>
</comment>
<dbReference type="EMBL" id="AF038873">
    <property type="protein sequence ID" value="AAC36057.1"/>
    <property type="molecule type" value="mRNA"/>
</dbReference>
<dbReference type="EMBL" id="AF045432">
    <property type="protein sequence ID" value="AAC41264.1"/>
    <property type="status" value="ALT_SEQ"/>
    <property type="molecule type" value="mRNA"/>
</dbReference>
<dbReference type="EMBL" id="EF488003">
    <property type="protein sequence ID" value="ABO77946.1"/>
    <property type="molecule type" value="mRNA"/>
</dbReference>
<dbReference type="EMBL" id="EF488004">
    <property type="protein sequence ID" value="ABO77947.1"/>
    <property type="molecule type" value="mRNA"/>
</dbReference>
<dbReference type="EMBL" id="AL592495">
    <property type="protein sequence ID" value="CAC95157.2"/>
    <property type="molecule type" value="Genomic_DNA"/>
</dbReference>
<dbReference type="EMBL" id="BX664601">
    <property type="protein sequence ID" value="CAK04103.1"/>
    <property type="molecule type" value="Genomic_DNA"/>
</dbReference>
<dbReference type="EMBL" id="BX322568">
    <property type="protein sequence ID" value="CAK04103.1"/>
    <property type="status" value="JOINED"/>
    <property type="molecule type" value="Genomic_DNA"/>
</dbReference>
<dbReference type="EMBL" id="BX322568">
    <property type="protein sequence ID" value="CAK11011.1"/>
    <property type="molecule type" value="Genomic_DNA"/>
</dbReference>
<dbReference type="EMBL" id="BX664601">
    <property type="protein sequence ID" value="CAK11011.1"/>
    <property type="status" value="JOINED"/>
    <property type="molecule type" value="Genomic_DNA"/>
</dbReference>
<dbReference type="EMBL" id="BC068324">
    <property type="protein sequence ID" value="AAH68324.1"/>
    <property type="molecule type" value="mRNA"/>
</dbReference>
<dbReference type="RefSeq" id="NP_998402.1">
    <molecule id="O93507-1"/>
    <property type="nucleotide sequence ID" value="NM_213237.1"/>
</dbReference>
<dbReference type="SMR" id="O93507"/>
<dbReference type="FunCoup" id="O93507">
    <property type="interactions" value="1417"/>
</dbReference>
<dbReference type="STRING" id="7955.ENSDARP00000077498"/>
<dbReference type="PaxDb" id="7955-ENSDARP00000077498"/>
<dbReference type="DNASU" id="30766"/>
<dbReference type="Ensembl" id="ENSDART00000083063">
    <molecule id="O93507-1"/>
    <property type="protein sequence ID" value="ENSDARP00000077498"/>
    <property type="gene ID" value="ENSDARG00000019930"/>
</dbReference>
<dbReference type="GeneID" id="30766"/>
<dbReference type="KEGG" id="dre:30766"/>
<dbReference type="AGR" id="ZFIN:ZDB-GENE-980526-501"/>
<dbReference type="CTD" id="6886"/>
<dbReference type="ZFIN" id="ZDB-GENE-980526-501">
    <property type="gene designation" value="tal1"/>
</dbReference>
<dbReference type="eggNOG" id="KOG4029">
    <property type="taxonomic scope" value="Eukaryota"/>
</dbReference>
<dbReference type="HOGENOM" id="CLU_059203_0_0_1"/>
<dbReference type="InParanoid" id="O93507"/>
<dbReference type="OMA" id="SKWAMEP"/>
<dbReference type="OrthoDB" id="10069510at2759"/>
<dbReference type="PhylomeDB" id="O93507"/>
<dbReference type="TreeFam" id="TF315153"/>
<dbReference type="PRO" id="PR:O93507"/>
<dbReference type="Proteomes" id="UP000000437">
    <property type="component" value="Chromosome 22"/>
</dbReference>
<dbReference type="Bgee" id="ENSDARG00000019930">
    <property type="expression patterns" value="Expressed in mesoderm and 74 other cell types or tissues"/>
</dbReference>
<dbReference type="GO" id="GO:0005634">
    <property type="term" value="C:nucleus"/>
    <property type="evidence" value="ECO:0000305"/>
    <property type="project" value="UniProtKB"/>
</dbReference>
<dbReference type="GO" id="GO:0003677">
    <property type="term" value="F:DNA binding"/>
    <property type="evidence" value="ECO:0000315"/>
    <property type="project" value="UniProtKB"/>
</dbReference>
<dbReference type="GO" id="GO:0000981">
    <property type="term" value="F:DNA-binding transcription factor activity, RNA polymerase II-specific"/>
    <property type="evidence" value="ECO:0000318"/>
    <property type="project" value="GO_Central"/>
</dbReference>
<dbReference type="GO" id="GO:0046983">
    <property type="term" value="F:protein dimerization activity"/>
    <property type="evidence" value="ECO:0007669"/>
    <property type="project" value="InterPro"/>
</dbReference>
<dbReference type="GO" id="GO:0000978">
    <property type="term" value="F:RNA polymerase II cis-regulatory region sequence-specific DNA binding"/>
    <property type="evidence" value="ECO:0000318"/>
    <property type="project" value="GO_Central"/>
</dbReference>
<dbReference type="GO" id="GO:0043565">
    <property type="term" value="F:sequence-specific DNA binding"/>
    <property type="evidence" value="ECO:0000314"/>
    <property type="project" value="ZFIN"/>
</dbReference>
<dbReference type="GO" id="GO:0001525">
    <property type="term" value="P:angiogenesis"/>
    <property type="evidence" value="ECO:0000315"/>
    <property type="project" value="UniProtKB"/>
</dbReference>
<dbReference type="GO" id="GO:0048844">
    <property type="term" value="P:artery morphogenesis"/>
    <property type="evidence" value="ECO:0000315"/>
    <property type="project" value="UniProtKB"/>
</dbReference>
<dbReference type="GO" id="GO:0001568">
    <property type="term" value="P:blood vessel development"/>
    <property type="evidence" value="ECO:0000315"/>
    <property type="project" value="ZFIN"/>
</dbReference>
<dbReference type="GO" id="GO:0060216">
    <property type="term" value="P:definitive hemopoiesis"/>
    <property type="evidence" value="ECO:0000315"/>
    <property type="project" value="UniProtKB"/>
</dbReference>
<dbReference type="GO" id="GO:0035050">
    <property type="term" value="P:embryonic heart tube development"/>
    <property type="evidence" value="ECO:0000315"/>
    <property type="project" value="ZFIN"/>
</dbReference>
<dbReference type="GO" id="GO:0035162">
    <property type="term" value="P:embryonic hemopoiesis"/>
    <property type="evidence" value="ECO:0000315"/>
    <property type="project" value="ZFIN"/>
</dbReference>
<dbReference type="GO" id="GO:0060214">
    <property type="term" value="P:endocardium formation"/>
    <property type="evidence" value="ECO:0000315"/>
    <property type="project" value="UniProtKB"/>
</dbReference>
<dbReference type="GO" id="GO:0003160">
    <property type="term" value="P:endocardium morphogenesis"/>
    <property type="evidence" value="ECO:0000315"/>
    <property type="project" value="ZFIN"/>
</dbReference>
<dbReference type="GO" id="GO:0030218">
    <property type="term" value="P:erythrocyte differentiation"/>
    <property type="evidence" value="ECO:0000316"/>
    <property type="project" value="ZFIN"/>
</dbReference>
<dbReference type="GO" id="GO:0007507">
    <property type="term" value="P:heart development"/>
    <property type="evidence" value="ECO:0000316"/>
    <property type="project" value="ZFIN"/>
</dbReference>
<dbReference type="GO" id="GO:0003007">
    <property type="term" value="P:heart morphogenesis"/>
    <property type="evidence" value="ECO:0000316"/>
    <property type="project" value="ZFIN"/>
</dbReference>
<dbReference type="GO" id="GO:0060217">
    <property type="term" value="P:hemangioblast cell differentiation"/>
    <property type="evidence" value="ECO:0000314"/>
    <property type="project" value="ZFIN"/>
</dbReference>
<dbReference type="GO" id="GO:0060218">
    <property type="term" value="P:hematopoietic stem cell differentiation"/>
    <property type="evidence" value="ECO:0000315"/>
    <property type="project" value="UniProtKB"/>
</dbReference>
<dbReference type="GO" id="GO:0030097">
    <property type="term" value="P:hemopoiesis"/>
    <property type="evidence" value="ECO:0000314"/>
    <property type="project" value="ZFIN"/>
</dbReference>
<dbReference type="GO" id="GO:0048368">
    <property type="term" value="P:lateral mesoderm development"/>
    <property type="evidence" value="ECO:0000315"/>
    <property type="project" value="ZFIN"/>
</dbReference>
<dbReference type="GO" id="GO:0030099">
    <property type="term" value="P:myeloid cell differentiation"/>
    <property type="evidence" value="ECO:0000270"/>
    <property type="project" value="UniProtKB"/>
</dbReference>
<dbReference type="GO" id="GO:0048823">
    <property type="term" value="P:nucleate erythrocyte development"/>
    <property type="evidence" value="ECO:0000315"/>
    <property type="project" value="ZFIN"/>
</dbReference>
<dbReference type="GO" id="GO:0045603">
    <property type="term" value="P:positive regulation of endothelial cell differentiation"/>
    <property type="evidence" value="ECO:0000315"/>
    <property type="project" value="ZFIN"/>
</dbReference>
<dbReference type="GO" id="GO:0060215">
    <property type="term" value="P:primitive hemopoiesis"/>
    <property type="evidence" value="ECO:0000314"/>
    <property type="project" value="ZFIN"/>
</dbReference>
<dbReference type="GO" id="GO:0006357">
    <property type="term" value="P:regulation of transcription by RNA polymerase II"/>
    <property type="evidence" value="ECO:0000318"/>
    <property type="project" value="GO_Central"/>
</dbReference>
<dbReference type="GO" id="GO:0019827">
    <property type="term" value="P:stem cell population maintenance"/>
    <property type="evidence" value="ECO:0000315"/>
    <property type="project" value="ZFIN"/>
</dbReference>
<dbReference type="GO" id="GO:0030878">
    <property type="term" value="P:thyroid gland development"/>
    <property type="evidence" value="ECO:0000315"/>
    <property type="project" value="ZFIN"/>
</dbReference>
<dbReference type="GO" id="GO:0001570">
    <property type="term" value="P:vasculogenesis"/>
    <property type="evidence" value="ECO:0000314"/>
    <property type="project" value="ZFIN"/>
</dbReference>
<dbReference type="CDD" id="cd19706">
    <property type="entry name" value="bHLH_TS_TAL1"/>
    <property type="match status" value="1"/>
</dbReference>
<dbReference type="FunFam" id="4.10.280.10:FF:000015">
    <property type="entry name" value="T-cell acute lymphocytic leukemia 1"/>
    <property type="match status" value="1"/>
</dbReference>
<dbReference type="Gene3D" id="4.10.280.10">
    <property type="entry name" value="Helix-loop-helix DNA-binding domain"/>
    <property type="match status" value="1"/>
</dbReference>
<dbReference type="InterPro" id="IPR011598">
    <property type="entry name" value="bHLH_dom"/>
</dbReference>
<dbReference type="InterPro" id="IPR036638">
    <property type="entry name" value="HLH_DNA-bd_sf"/>
</dbReference>
<dbReference type="InterPro" id="IPR040238">
    <property type="entry name" value="TAL-like"/>
</dbReference>
<dbReference type="PANTHER" id="PTHR13864:SF27">
    <property type="entry name" value="T-CELL ACUTE LYMPHOCYTIC LEUKEMIA PROTEIN 1 HOMOLOG"/>
    <property type="match status" value="1"/>
</dbReference>
<dbReference type="PANTHER" id="PTHR13864">
    <property type="entry name" value="T-CELL ACUTE LYMPHOCYTIC LEUKEMIA/STEM CELL LEUKEMIA-RELATED"/>
    <property type="match status" value="1"/>
</dbReference>
<dbReference type="Pfam" id="PF00010">
    <property type="entry name" value="HLH"/>
    <property type="match status" value="1"/>
</dbReference>
<dbReference type="SMART" id="SM00353">
    <property type="entry name" value="HLH"/>
    <property type="match status" value="1"/>
</dbReference>
<dbReference type="SUPFAM" id="SSF47459">
    <property type="entry name" value="HLH, helix-loop-helix DNA-binding domain"/>
    <property type="match status" value="1"/>
</dbReference>
<dbReference type="PROSITE" id="PS50888">
    <property type="entry name" value="BHLH"/>
    <property type="match status" value="1"/>
</dbReference>
<sequence length="324" mass="35705">MMEKLKSEQFPLSPSAEGCASPPRGDGDARGKQEGTTAETGEHRLPEELNGVAKETAHHATELKKEVAVIELSRRGGSADIKGRELKAELSHKVQTTELCRPPIPLPLPPRDPLSDTRMVQLSPPAFPLPARAMLYSNMTTPLATINSGFAGDAEQYGMYPSNRVKRRPAPYEVEINDGSQPKIVRRIFTNSRERWRQQNVNGAFAELRKLIPTHPPDKKLSKNEILRLAMKYINFLAKLLNDQDDMVGGEAPARANRDSRDATLVRDDLLQEMLSPNSSCGSLLDGDASPESFTEDQDSSVESRPSARGLHHSSLPLDGNAQR</sequence>
<keyword id="KW-0025">Alternative splicing</keyword>
<keyword id="KW-0037">Angiogenesis</keyword>
<keyword id="KW-0217">Developmental protein</keyword>
<keyword id="KW-0221">Differentiation</keyword>
<keyword id="KW-0238">DNA-binding</keyword>
<keyword id="KW-0539">Nucleus</keyword>
<keyword id="KW-1185">Reference proteome</keyword>
<keyword id="KW-0804">Transcription</keyword>
<keyword id="KW-0805">Transcription regulation</keyword>